<dbReference type="EMBL" id="AL445067">
    <property type="protein sequence ID" value="CAC12385.1"/>
    <property type="molecule type" value="Genomic_DNA"/>
</dbReference>
<dbReference type="RefSeq" id="WP_010901668.1">
    <property type="nucleotide sequence ID" value="NC_002578.1"/>
</dbReference>
<dbReference type="SMR" id="Q9HIR9"/>
<dbReference type="FunCoup" id="Q9HIR9">
    <property type="interactions" value="194"/>
</dbReference>
<dbReference type="STRING" id="273075.gene:9572484"/>
<dbReference type="PaxDb" id="273075-Ta1261"/>
<dbReference type="EnsemblBacteria" id="CAC12385">
    <property type="protein sequence ID" value="CAC12385"/>
    <property type="gene ID" value="CAC12385"/>
</dbReference>
<dbReference type="KEGG" id="tac:Ta1261"/>
<dbReference type="eggNOG" id="arCOG04095">
    <property type="taxonomic scope" value="Archaea"/>
</dbReference>
<dbReference type="HOGENOM" id="CLU_095071_3_0_2"/>
<dbReference type="InParanoid" id="Q9HIR9"/>
<dbReference type="OrthoDB" id="23569at2157"/>
<dbReference type="Proteomes" id="UP000001024">
    <property type="component" value="Chromosome"/>
</dbReference>
<dbReference type="GO" id="GO:0022625">
    <property type="term" value="C:cytosolic large ribosomal subunit"/>
    <property type="evidence" value="ECO:0007669"/>
    <property type="project" value="TreeGrafter"/>
</dbReference>
<dbReference type="GO" id="GO:0070180">
    <property type="term" value="F:large ribosomal subunit rRNA binding"/>
    <property type="evidence" value="ECO:0007669"/>
    <property type="project" value="TreeGrafter"/>
</dbReference>
<dbReference type="GO" id="GO:0003735">
    <property type="term" value="F:structural constituent of ribosome"/>
    <property type="evidence" value="ECO:0007669"/>
    <property type="project" value="InterPro"/>
</dbReference>
<dbReference type="GO" id="GO:0006412">
    <property type="term" value="P:translation"/>
    <property type="evidence" value="ECO:0007669"/>
    <property type="project" value="UniProtKB-UniRule"/>
</dbReference>
<dbReference type="CDD" id="cd00337">
    <property type="entry name" value="Ribosomal_uL14"/>
    <property type="match status" value="1"/>
</dbReference>
<dbReference type="FunFam" id="2.40.150.20:FF:000007">
    <property type="entry name" value="50S ribosomal protein L14"/>
    <property type="match status" value="1"/>
</dbReference>
<dbReference type="Gene3D" id="2.40.150.20">
    <property type="entry name" value="Ribosomal protein L14"/>
    <property type="match status" value="1"/>
</dbReference>
<dbReference type="HAMAP" id="MF_01367">
    <property type="entry name" value="Ribosomal_uL14"/>
    <property type="match status" value="1"/>
</dbReference>
<dbReference type="InterPro" id="IPR000218">
    <property type="entry name" value="Ribosomal_uL14"/>
</dbReference>
<dbReference type="InterPro" id="IPR019971">
    <property type="entry name" value="Ribosomal_uL14_arc"/>
</dbReference>
<dbReference type="InterPro" id="IPR019972">
    <property type="entry name" value="Ribosomal_uL14_CS"/>
</dbReference>
<dbReference type="InterPro" id="IPR036853">
    <property type="entry name" value="Ribosomal_uL14_sf"/>
</dbReference>
<dbReference type="NCBIfam" id="NF006344">
    <property type="entry name" value="PRK08571.1"/>
    <property type="match status" value="1"/>
</dbReference>
<dbReference type="NCBIfam" id="TIGR03673">
    <property type="entry name" value="uL14_arch"/>
    <property type="match status" value="1"/>
</dbReference>
<dbReference type="PANTHER" id="PTHR11761">
    <property type="entry name" value="50S/60S RIBOSOMAL PROTEIN L14/L23"/>
    <property type="match status" value="1"/>
</dbReference>
<dbReference type="PANTHER" id="PTHR11761:SF8">
    <property type="entry name" value="LARGE RIBOSOMAL SUBUNIT PROTEIN UL14"/>
    <property type="match status" value="1"/>
</dbReference>
<dbReference type="Pfam" id="PF00238">
    <property type="entry name" value="Ribosomal_L14"/>
    <property type="match status" value="1"/>
</dbReference>
<dbReference type="SMART" id="SM01374">
    <property type="entry name" value="Ribosomal_L14"/>
    <property type="match status" value="1"/>
</dbReference>
<dbReference type="SUPFAM" id="SSF50193">
    <property type="entry name" value="Ribosomal protein L14"/>
    <property type="match status" value="1"/>
</dbReference>
<dbReference type="PROSITE" id="PS00049">
    <property type="entry name" value="RIBOSOMAL_L14"/>
    <property type="match status" value="1"/>
</dbReference>
<keyword id="KW-1185">Reference proteome</keyword>
<keyword id="KW-0687">Ribonucleoprotein</keyword>
<keyword id="KW-0689">Ribosomal protein</keyword>
<keyword id="KW-0694">RNA-binding</keyword>
<keyword id="KW-0699">rRNA-binding</keyword>
<feature type="chain" id="PRO_0000266616" description="Large ribosomal subunit protein uL14">
    <location>
        <begin position="1"/>
        <end position="132"/>
    </location>
</feature>
<proteinExistence type="inferred from homology"/>
<sequence>MKGIAGRQTRGLPLGANITCADNTGARSISLIDVKAWHGKARRIPAAGVGDMFMASVKKGTPEMRSKVVYAVVIRQKRPYRRPDGTMVQFEDNAAVLVTPDGEVRGSEIKGPVAREAAERWPRIAAIASIIV</sequence>
<gene>
    <name evidence="1" type="primary">rpl14</name>
    <name type="ordered locus">Ta1261</name>
</gene>
<protein>
    <recommendedName>
        <fullName evidence="1">Large ribosomal subunit protein uL14</fullName>
    </recommendedName>
    <alternativeName>
        <fullName evidence="2">50S ribosomal protein L14</fullName>
    </alternativeName>
</protein>
<evidence type="ECO:0000255" key="1">
    <source>
        <dbReference type="HAMAP-Rule" id="MF_01367"/>
    </source>
</evidence>
<evidence type="ECO:0000305" key="2"/>
<accession>Q9HIR9</accession>
<name>RL14_THEAC</name>
<reference key="1">
    <citation type="journal article" date="2000" name="Nature">
        <title>The genome sequence of the thermoacidophilic scavenger Thermoplasma acidophilum.</title>
        <authorList>
            <person name="Ruepp A."/>
            <person name="Graml W."/>
            <person name="Santos-Martinez M.-L."/>
            <person name="Koretke K.K."/>
            <person name="Volker C."/>
            <person name="Mewes H.-W."/>
            <person name="Frishman D."/>
            <person name="Stocker S."/>
            <person name="Lupas A.N."/>
            <person name="Baumeister W."/>
        </authorList>
    </citation>
    <scope>NUCLEOTIDE SEQUENCE [LARGE SCALE GENOMIC DNA]</scope>
    <source>
        <strain>ATCC 25905 / DSM 1728 / JCM 9062 / NBRC 15155 / AMRC-C165</strain>
    </source>
</reference>
<organism>
    <name type="scientific">Thermoplasma acidophilum (strain ATCC 25905 / DSM 1728 / JCM 9062 / NBRC 15155 / AMRC-C165)</name>
    <dbReference type="NCBI Taxonomy" id="273075"/>
    <lineage>
        <taxon>Archaea</taxon>
        <taxon>Methanobacteriati</taxon>
        <taxon>Thermoplasmatota</taxon>
        <taxon>Thermoplasmata</taxon>
        <taxon>Thermoplasmatales</taxon>
        <taxon>Thermoplasmataceae</taxon>
        <taxon>Thermoplasma</taxon>
    </lineage>
</organism>
<comment type="function">
    <text evidence="1">Binds to 23S rRNA. Forms part of two intersubunit bridges in the 70S ribosome.</text>
</comment>
<comment type="subunit">
    <text evidence="1">Part of the 50S ribosomal subunit. Forms a cluster with proteins L3 and L24e, part of which may contact the 16S rRNA in 2 intersubunit bridges.</text>
</comment>
<comment type="similarity">
    <text evidence="1">Belongs to the universal ribosomal protein uL14 family.</text>
</comment>